<protein>
    <recommendedName>
        <fullName evidence="1">NAD(P)H-hydrate epimerase</fullName>
        <ecNumber>5.1.99.6</ecNumber>
    </recommendedName>
    <alternativeName>
        <fullName evidence="1">NAD(P)HX epimerase</fullName>
    </alternativeName>
</protein>
<gene>
    <name type="ORF">SS1G_11419</name>
</gene>
<proteinExistence type="inferred from homology"/>
<accession>A7F1E9</accession>
<keyword id="KW-0963">Cytoplasm</keyword>
<keyword id="KW-0413">Isomerase</keyword>
<keyword id="KW-0479">Metal-binding</keyword>
<keyword id="KW-0496">Mitochondrion</keyword>
<keyword id="KW-0520">NAD</keyword>
<keyword id="KW-0521">NADP</keyword>
<keyword id="KW-0547">Nucleotide-binding</keyword>
<keyword id="KW-0630">Potassium</keyword>
<keyword id="KW-1185">Reference proteome</keyword>
<evidence type="ECO:0000255" key="1">
    <source>
        <dbReference type="HAMAP-Rule" id="MF_03159"/>
    </source>
</evidence>
<comment type="function">
    <text evidence="1">Catalyzes the epimerization of the S- and R-forms of NAD(P)HX, a damaged form of NAD(P)H that is a result of enzymatic or heat-dependent hydration. This is a prerequisite for the S-specific NAD(P)H-hydrate dehydratase to allow the repair of both epimers of NAD(P)HX.</text>
</comment>
<comment type="catalytic activity">
    <reaction>
        <text>(6R)-NADHX = (6S)-NADHX</text>
        <dbReference type="Rhea" id="RHEA:32215"/>
        <dbReference type="ChEBI" id="CHEBI:64074"/>
        <dbReference type="ChEBI" id="CHEBI:64075"/>
        <dbReference type="EC" id="5.1.99.6"/>
    </reaction>
</comment>
<comment type="catalytic activity">
    <reaction>
        <text>(6R)-NADPHX = (6S)-NADPHX</text>
        <dbReference type="Rhea" id="RHEA:32227"/>
        <dbReference type="ChEBI" id="CHEBI:64076"/>
        <dbReference type="ChEBI" id="CHEBI:64077"/>
        <dbReference type="EC" id="5.1.99.6"/>
    </reaction>
</comment>
<comment type="cofactor">
    <cofactor evidence="1">
        <name>K(+)</name>
        <dbReference type="ChEBI" id="CHEBI:29103"/>
    </cofactor>
    <text evidence="1">Binds 1 potassium ion per subunit.</text>
</comment>
<comment type="subcellular location">
    <subcellularLocation>
        <location evidence="1">Cytoplasm</location>
    </subcellularLocation>
    <subcellularLocation>
        <location evidence="1">Mitochondrion</location>
    </subcellularLocation>
</comment>
<comment type="similarity">
    <text evidence="1">Belongs to the NnrE/AIBP family.</text>
</comment>
<sequence>MAAKYLSAANAAALDKDLMSMGAFSLDQLMELAGLSVSQVVYKVHPPSKGRRILVACGPGNNGGDGLVAARHLWHYGYKPTIYYPKPGKNELYQRLSTQLRNLSIPFTDDFPSAIKDSDHIVDAIFGFSFTGSIRSPFDTIISTLEATSLPITSIDAPSSWDITNGPPSSGPGANLMPQYLISLTAPKPLVRYFKGRHFLGGRFVTPEIHQKYNLQLPEYEGVDQIVEVPIEESEEKL</sequence>
<dbReference type="EC" id="5.1.99.6"/>
<dbReference type="EMBL" id="CH476638">
    <property type="protein sequence ID" value="EDN95541.1"/>
    <property type="molecule type" value="Genomic_DNA"/>
</dbReference>
<dbReference type="RefSeq" id="XP_001587427.1">
    <property type="nucleotide sequence ID" value="XM_001587377.1"/>
</dbReference>
<dbReference type="SMR" id="A7F1E9"/>
<dbReference type="FunCoup" id="A7F1E9">
    <property type="interactions" value="235"/>
</dbReference>
<dbReference type="STRING" id="665079.A7F1E9"/>
<dbReference type="GeneID" id="5483531"/>
<dbReference type="KEGG" id="ssl:SS1G_11419"/>
<dbReference type="VEuPathDB" id="FungiDB:sscle_07g059780"/>
<dbReference type="InParanoid" id="A7F1E9"/>
<dbReference type="OMA" id="RHLFHYG"/>
<dbReference type="OrthoDB" id="10064708at2759"/>
<dbReference type="Proteomes" id="UP000001312">
    <property type="component" value="Unassembled WGS sequence"/>
</dbReference>
<dbReference type="GO" id="GO:0005739">
    <property type="term" value="C:mitochondrion"/>
    <property type="evidence" value="ECO:0000318"/>
    <property type="project" value="GO_Central"/>
</dbReference>
<dbReference type="GO" id="GO:0046872">
    <property type="term" value="F:metal ion binding"/>
    <property type="evidence" value="ECO:0007669"/>
    <property type="project" value="UniProtKB-KW"/>
</dbReference>
<dbReference type="GO" id="GO:0052856">
    <property type="term" value="F:NAD(P)HX epimerase activity"/>
    <property type="evidence" value="ECO:0000318"/>
    <property type="project" value="GO_Central"/>
</dbReference>
<dbReference type="GO" id="GO:0000166">
    <property type="term" value="F:nucleotide binding"/>
    <property type="evidence" value="ECO:0007669"/>
    <property type="project" value="UniProtKB-KW"/>
</dbReference>
<dbReference type="FunFam" id="3.40.50.10260:FF:000005">
    <property type="entry name" value="NAD(P)H-hydrate epimerase"/>
    <property type="match status" value="1"/>
</dbReference>
<dbReference type="Gene3D" id="3.40.50.10260">
    <property type="entry name" value="YjeF N-terminal domain"/>
    <property type="match status" value="1"/>
</dbReference>
<dbReference type="HAMAP" id="MF_01966">
    <property type="entry name" value="NADHX_epimerase"/>
    <property type="match status" value="1"/>
</dbReference>
<dbReference type="InterPro" id="IPR004443">
    <property type="entry name" value="YjeF_N_dom"/>
</dbReference>
<dbReference type="InterPro" id="IPR036652">
    <property type="entry name" value="YjeF_N_dom_sf"/>
</dbReference>
<dbReference type="InterPro" id="IPR032976">
    <property type="entry name" value="YJEFN_prot_NAXE-like"/>
</dbReference>
<dbReference type="NCBIfam" id="TIGR00197">
    <property type="entry name" value="yjeF_nterm"/>
    <property type="match status" value="1"/>
</dbReference>
<dbReference type="PANTHER" id="PTHR13232">
    <property type="entry name" value="NAD(P)H-HYDRATE EPIMERASE"/>
    <property type="match status" value="1"/>
</dbReference>
<dbReference type="PANTHER" id="PTHR13232:SF10">
    <property type="entry name" value="NAD(P)H-HYDRATE EPIMERASE"/>
    <property type="match status" value="1"/>
</dbReference>
<dbReference type="Pfam" id="PF03853">
    <property type="entry name" value="YjeF_N"/>
    <property type="match status" value="1"/>
</dbReference>
<dbReference type="SUPFAM" id="SSF64153">
    <property type="entry name" value="YjeF N-terminal domain-like"/>
    <property type="match status" value="1"/>
</dbReference>
<dbReference type="PROSITE" id="PS51385">
    <property type="entry name" value="YJEF_N"/>
    <property type="match status" value="1"/>
</dbReference>
<organism>
    <name type="scientific">Sclerotinia sclerotiorum (strain ATCC 18683 / 1980 / Ss-1)</name>
    <name type="common">White mold</name>
    <name type="synonym">Whetzelinia sclerotiorum</name>
    <dbReference type="NCBI Taxonomy" id="665079"/>
    <lineage>
        <taxon>Eukaryota</taxon>
        <taxon>Fungi</taxon>
        <taxon>Dikarya</taxon>
        <taxon>Ascomycota</taxon>
        <taxon>Pezizomycotina</taxon>
        <taxon>Leotiomycetes</taxon>
        <taxon>Helotiales</taxon>
        <taxon>Sclerotiniaceae</taxon>
        <taxon>Sclerotinia</taxon>
    </lineage>
</organism>
<name>NNRE_SCLS1</name>
<reference key="1">
    <citation type="journal article" date="2011" name="PLoS Genet.">
        <title>Genomic analysis of the necrotrophic fungal pathogens Sclerotinia sclerotiorum and Botrytis cinerea.</title>
        <authorList>
            <person name="Amselem J."/>
            <person name="Cuomo C.A."/>
            <person name="van Kan J.A.L."/>
            <person name="Viaud M."/>
            <person name="Benito E.P."/>
            <person name="Couloux A."/>
            <person name="Coutinho P.M."/>
            <person name="de Vries R.P."/>
            <person name="Dyer P.S."/>
            <person name="Fillinger S."/>
            <person name="Fournier E."/>
            <person name="Gout L."/>
            <person name="Hahn M."/>
            <person name="Kohn L."/>
            <person name="Lapalu N."/>
            <person name="Plummer K.M."/>
            <person name="Pradier J.-M."/>
            <person name="Quevillon E."/>
            <person name="Sharon A."/>
            <person name="Simon A."/>
            <person name="ten Have A."/>
            <person name="Tudzynski B."/>
            <person name="Tudzynski P."/>
            <person name="Wincker P."/>
            <person name="Andrew M."/>
            <person name="Anthouard V."/>
            <person name="Beever R.E."/>
            <person name="Beffa R."/>
            <person name="Benoit I."/>
            <person name="Bouzid O."/>
            <person name="Brault B."/>
            <person name="Chen Z."/>
            <person name="Choquer M."/>
            <person name="Collemare J."/>
            <person name="Cotton P."/>
            <person name="Danchin E.G."/>
            <person name="Da Silva C."/>
            <person name="Gautier A."/>
            <person name="Giraud C."/>
            <person name="Giraud T."/>
            <person name="Gonzalez C."/>
            <person name="Grossetete S."/>
            <person name="Gueldener U."/>
            <person name="Henrissat B."/>
            <person name="Howlett B.J."/>
            <person name="Kodira C."/>
            <person name="Kretschmer M."/>
            <person name="Lappartient A."/>
            <person name="Leroch M."/>
            <person name="Levis C."/>
            <person name="Mauceli E."/>
            <person name="Neuveglise C."/>
            <person name="Oeser B."/>
            <person name="Pearson M."/>
            <person name="Poulain J."/>
            <person name="Poussereau N."/>
            <person name="Quesneville H."/>
            <person name="Rascle C."/>
            <person name="Schumacher J."/>
            <person name="Segurens B."/>
            <person name="Sexton A."/>
            <person name="Silva E."/>
            <person name="Sirven C."/>
            <person name="Soanes D.M."/>
            <person name="Talbot N.J."/>
            <person name="Templeton M."/>
            <person name="Yandava C."/>
            <person name="Yarden O."/>
            <person name="Zeng Q."/>
            <person name="Rollins J.A."/>
            <person name="Lebrun M.-H."/>
            <person name="Dickman M."/>
        </authorList>
    </citation>
    <scope>NUCLEOTIDE SEQUENCE [LARGE SCALE GENOMIC DNA]</scope>
    <source>
        <strain>ATCC 18683 / 1980 / Ss-1</strain>
    </source>
</reference>
<feature type="chain" id="PRO_0000416339" description="NAD(P)H-hydrate epimerase">
    <location>
        <begin position="1"/>
        <end position="238"/>
    </location>
</feature>
<feature type="domain" description="YjeF N-terminal" evidence="1">
    <location>
        <begin position="11"/>
        <end position="217"/>
    </location>
</feature>
<feature type="binding site" evidence="1">
    <location>
        <begin position="61"/>
        <end position="65"/>
    </location>
    <ligand>
        <name>(6S)-NADPHX</name>
        <dbReference type="ChEBI" id="CHEBI:64076"/>
    </ligand>
</feature>
<feature type="binding site" evidence="1">
    <location>
        <position position="62"/>
    </location>
    <ligand>
        <name>K(+)</name>
        <dbReference type="ChEBI" id="CHEBI:29103"/>
    </ligand>
</feature>
<feature type="binding site" evidence="1">
    <location>
        <position position="123"/>
    </location>
    <ligand>
        <name>K(+)</name>
        <dbReference type="ChEBI" id="CHEBI:29103"/>
    </ligand>
</feature>
<feature type="binding site" evidence="1">
    <location>
        <begin position="127"/>
        <end position="133"/>
    </location>
    <ligand>
        <name>(6S)-NADPHX</name>
        <dbReference type="ChEBI" id="CHEBI:64076"/>
    </ligand>
</feature>
<feature type="binding site" evidence="1">
    <location>
        <position position="156"/>
    </location>
    <ligand>
        <name>(6S)-NADPHX</name>
        <dbReference type="ChEBI" id="CHEBI:64076"/>
    </ligand>
</feature>
<feature type="binding site" evidence="1">
    <location>
        <position position="159"/>
    </location>
    <ligand>
        <name>K(+)</name>
        <dbReference type="ChEBI" id="CHEBI:29103"/>
    </ligand>
</feature>